<accession>P04276</accession>
<comment type="function">
    <text evidence="1">Involved in vitamin D transport and storage, scavenging of extracellular G-actin, enhancement of the chemotactic activity of C5 alpha for neutrophils in inflammation and macrophage activation.</text>
</comment>
<comment type="subunit">
    <text evidence="1 2">Associates with membrane-bound immunoglobulin on the surface of B-lymphocytes and with IgG Fc receptor on the membranes of T-lymphocytes. Interacts with LRP2; the interaction is required for renal uptake of GC in complex with 25-hydroxyvitamin D3.</text>
</comment>
<comment type="subcellular location">
    <subcellularLocation>
        <location evidence="6">Secreted</location>
    </subcellularLocation>
</comment>
<comment type="similarity">
    <text evidence="4">Belongs to the ALB/AFP/VDB family.</text>
</comment>
<gene>
    <name type="primary">Gc</name>
    <name type="synonym">Dbp</name>
</gene>
<feature type="signal peptide" evidence="6">
    <location>
        <begin position="1"/>
        <end position="16"/>
    </location>
</feature>
<feature type="chain" id="PRO_0000001105" description="Vitamin D-binding protein" evidence="5">
    <location>
        <begin position="17"/>
        <end position="476"/>
    </location>
</feature>
<feature type="domain" description="Albumin 1" evidence="4">
    <location>
        <begin position="17"/>
        <end position="208"/>
    </location>
</feature>
<feature type="domain" description="Albumin 2" evidence="4">
    <location>
        <begin position="209"/>
        <end position="394"/>
    </location>
</feature>
<feature type="domain" description="Albumin 3" evidence="4">
    <location>
        <begin position="395"/>
        <end position="476"/>
    </location>
</feature>
<feature type="modified residue" description="Phosphoserine" evidence="8">
    <location>
        <position position="434"/>
    </location>
</feature>
<feature type="glycosylation site" description="N-linked (GlcNAc...) asparagine" evidence="3">
    <location>
        <position position="288"/>
    </location>
</feature>
<feature type="disulfide bond" evidence="4">
    <location>
        <begin position="29"/>
        <end position="75"/>
    </location>
</feature>
<feature type="disulfide bond" evidence="4">
    <location>
        <begin position="74"/>
        <end position="83"/>
    </location>
</feature>
<feature type="disulfide bond" evidence="4">
    <location>
        <begin position="96"/>
        <end position="112"/>
    </location>
</feature>
<feature type="disulfide bond" evidence="4">
    <location>
        <begin position="111"/>
        <end position="122"/>
    </location>
</feature>
<feature type="disulfide bond" evidence="4">
    <location>
        <begin position="145"/>
        <end position="190"/>
    </location>
</feature>
<feature type="disulfide bond" evidence="4">
    <location>
        <begin position="189"/>
        <end position="198"/>
    </location>
</feature>
<feature type="disulfide bond" evidence="4">
    <location>
        <begin position="220"/>
        <end position="266"/>
    </location>
</feature>
<feature type="disulfide bond" evidence="4">
    <location>
        <begin position="265"/>
        <end position="273"/>
    </location>
</feature>
<feature type="disulfide bond" evidence="4">
    <location>
        <begin position="286"/>
        <end position="300"/>
    </location>
</feature>
<feature type="disulfide bond" evidence="4">
    <location>
        <begin position="299"/>
        <end position="311"/>
    </location>
</feature>
<feature type="disulfide bond" evidence="4">
    <location>
        <begin position="335"/>
        <end position="376"/>
    </location>
</feature>
<feature type="disulfide bond" evidence="4">
    <location>
        <begin position="375"/>
        <end position="384"/>
    </location>
</feature>
<feature type="disulfide bond" evidence="4">
    <location>
        <begin position="407"/>
        <end position="453"/>
    </location>
</feature>
<feature type="disulfide bond" evidence="4">
    <location>
        <begin position="452"/>
        <end position="462"/>
    </location>
</feature>
<feature type="sequence conflict" description="In Ref. 2; AAA41082." evidence="7" ref="2">
    <original>E</original>
    <variation>Q</variation>
    <location>
        <position position="132"/>
    </location>
</feature>
<feature type="sequence conflict" description="In Ref. 1; AAA41080." evidence="7" ref="1">
    <original>L</original>
    <variation>P</variation>
    <location>
        <position position="174"/>
    </location>
</feature>
<feature type="sequence conflict" description="In Ref. 2; AAA41082." evidence="7" ref="2">
    <original>L</original>
    <variation>S</variation>
    <location>
        <position position="210"/>
    </location>
</feature>
<keyword id="KW-0009">Actin-binding</keyword>
<keyword id="KW-0903">Direct protein sequencing</keyword>
<keyword id="KW-1015">Disulfide bond</keyword>
<keyword id="KW-0325">Glycoprotein</keyword>
<keyword id="KW-0597">Phosphoprotein</keyword>
<keyword id="KW-1185">Reference proteome</keyword>
<keyword id="KW-0677">Repeat</keyword>
<keyword id="KW-0964">Secreted</keyword>
<keyword id="KW-0732">Signal</keyword>
<keyword id="KW-0813">Transport</keyword>
<keyword id="KW-0848">Vitamin D</keyword>
<name>VTDB_RAT</name>
<evidence type="ECO:0000250" key="1">
    <source>
        <dbReference type="UniProtKB" id="P02774"/>
    </source>
</evidence>
<evidence type="ECO:0000250" key="2">
    <source>
        <dbReference type="UniProtKB" id="P21614"/>
    </source>
</evidence>
<evidence type="ECO:0000255" key="3"/>
<evidence type="ECO:0000255" key="4">
    <source>
        <dbReference type="PROSITE-ProRule" id="PRU00769"/>
    </source>
</evidence>
<evidence type="ECO:0000269" key="5">
    <source>
    </source>
</evidence>
<evidence type="ECO:0000269" key="6">
    <source>
    </source>
</evidence>
<evidence type="ECO:0000305" key="7"/>
<evidence type="ECO:0007744" key="8">
    <source>
    </source>
</evidence>
<organism>
    <name type="scientific">Rattus norvegicus</name>
    <name type="common">Rat</name>
    <dbReference type="NCBI Taxonomy" id="10116"/>
    <lineage>
        <taxon>Eukaryota</taxon>
        <taxon>Metazoa</taxon>
        <taxon>Chordata</taxon>
        <taxon>Craniata</taxon>
        <taxon>Vertebrata</taxon>
        <taxon>Euteleostomi</taxon>
        <taxon>Mammalia</taxon>
        <taxon>Eutheria</taxon>
        <taxon>Euarchontoglires</taxon>
        <taxon>Glires</taxon>
        <taxon>Rodentia</taxon>
        <taxon>Myomorpha</taxon>
        <taxon>Muroidea</taxon>
        <taxon>Muridae</taxon>
        <taxon>Murinae</taxon>
        <taxon>Rattus</taxon>
    </lineage>
</organism>
<reference key="1">
    <citation type="journal article" date="1986" name="J. Biol. Chem.">
        <title>Rat vitamin D binding protein. Determination of the full-length primary structure from cloned cDNA.</title>
        <authorList>
            <person name="Cooke N.E."/>
        </authorList>
    </citation>
    <scope>NUCLEOTIDE SEQUENCE [MRNA]</scope>
</reference>
<reference key="2">
    <citation type="journal article" date="1989" name="J. Biol. Chem.">
        <title>The vitamin D-binding protein, alpha-fetoprotein, albumin multigene family: detection of transcripts in multiple tissues.</title>
        <authorList>
            <person name="McLeod J.F."/>
            <person name="Cooke N.E."/>
        </authorList>
    </citation>
    <scope>NUCLEOTIDE SEQUENCE [MRNA]</scope>
</reference>
<reference key="3">
    <citation type="journal article" date="1991" name="J. Biol. Chem.">
        <title>The rat vitamin D binding protein (Gc-globulin) gene. Structural analysis, functional and evolutionary correlations.</title>
        <authorList>
            <person name="Ray K."/>
            <person name="Wang X."/>
            <person name="Zhao M."/>
            <person name="Cooke N.E."/>
        </authorList>
    </citation>
    <scope>NUCLEOTIDE SEQUENCE [GENOMIC DNA]</scope>
</reference>
<reference key="4">
    <citation type="journal article" date="1986" name="Life Sci.">
        <title>The amino acid sequence of the NH2-terminal portion of rat and human vitamin D binding protein: evidence for a high degree of homology between rat and human vitamin D binding protein.</title>
        <authorList>
            <person name="Litwiller R.D."/>
            <person name="Fass D.N."/>
            <person name="Kumar R."/>
        </authorList>
    </citation>
    <scope>PROTEIN SEQUENCE OF 17-40</scope>
    <scope>SUBCELLULAR LOCATION</scope>
</reference>
<reference key="5">
    <citation type="journal article" date="2012" name="Nat. Commun.">
        <title>Quantitative maps of protein phosphorylation sites across 14 different rat organs and tissues.</title>
        <authorList>
            <person name="Lundby A."/>
            <person name="Secher A."/>
            <person name="Lage K."/>
            <person name="Nordsborg N.B."/>
            <person name="Dmytriyev A."/>
            <person name="Lundby C."/>
            <person name="Olsen J.V."/>
        </authorList>
    </citation>
    <scope>PHOSPHORYLATION [LARGE SCALE ANALYSIS] AT SER-434</scope>
    <scope>IDENTIFICATION BY MASS SPECTROMETRY [LARGE SCALE ANALYSIS]</scope>
</reference>
<dbReference type="EMBL" id="M12450">
    <property type="protein sequence ID" value="AAA41080.1"/>
    <property type="molecule type" value="mRNA"/>
</dbReference>
<dbReference type="EMBL" id="J05148">
    <property type="protein sequence ID" value="AAA41082.1"/>
    <property type="molecule type" value="mRNA"/>
</dbReference>
<dbReference type="EMBL" id="M60205">
    <property type="protein sequence ID" value="AAA41081.1"/>
    <property type="molecule type" value="Genomic_DNA"/>
</dbReference>
<dbReference type="EMBL" id="M60197">
    <property type="protein sequence ID" value="AAA41081.1"/>
    <property type="status" value="JOINED"/>
    <property type="molecule type" value="Genomic_DNA"/>
</dbReference>
<dbReference type="EMBL" id="M60198">
    <property type="protein sequence ID" value="AAA41081.1"/>
    <property type="status" value="JOINED"/>
    <property type="molecule type" value="Genomic_DNA"/>
</dbReference>
<dbReference type="EMBL" id="M60199">
    <property type="protein sequence ID" value="AAA41081.1"/>
    <property type="status" value="JOINED"/>
    <property type="molecule type" value="Genomic_DNA"/>
</dbReference>
<dbReference type="EMBL" id="M60200">
    <property type="protein sequence ID" value="AAA41081.1"/>
    <property type="status" value="JOINED"/>
    <property type="molecule type" value="Genomic_DNA"/>
</dbReference>
<dbReference type="EMBL" id="M60201">
    <property type="protein sequence ID" value="AAA41081.1"/>
    <property type="status" value="JOINED"/>
    <property type="molecule type" value="Genomic_DNA"/>
</dbReference>
<dbReference type="EMBL" id="M60202">
    <property type="protein sequence ID" value="AAA41081.1"/>
    <property type="status" value="JOINED"/>
    <property type="molecule type" value="Genomic_DNA"/>
</dbReference>
<dbReference type="EMBL" id="M60203">
    <property type="protein sequence ID" value="AAA41081.1"/>
    <property type="status" value="JOINED"/>
    <property type="molecule type" value="Genomic_DNA"/>
</dbReference>
<dbReference type="EMBL" id="M60204">
    <property type="protein sequence ID" value="AAA41081.1"/>
    <property type="status" value="JOINED"/>
    <property type="molecule type" value="Genomic_DNA"/>
</dbReference>
<dbReference type="PIR" id="A38726">
    <property type="entry name" value="VYRTD"/>
</dbReference>
<dbReference type="SMR" id="P04276"/>
<dbReference type="FunCoup" id="P04276">
    <property type="interactions" value="42"/>
</dbReference>
<dbReference type="STRING" id="10116.ENSRNOP00000004174"/>
<dbReference type="BindingDB" id="P04276"/>
<dbReference type="ChEMBL" id="CHEMBL2163"/>
<dbReference type="GlyCosmos" id="P04276">
    <property type="glycosylation" value="1 site, No reported glycans"/>
</dbReference>
<dbReference type="GlyGen" id="P04276">
    <property type="glycosylation" value="1 site"/>
</dbReference>
<dbReference type="iPTMnet" id="P04276"/>
<dbReference type="PhosphoSitePlus" id="P04276"/>
<dbReference type="SwissPalm" id="P04276"/>
<dbReference type="PaxDb" id="10116-ENSRNOP00000004174"/>
<dbReference type="UCSC" id="RGD:2667">
    <property type="organism name" value="rat"/>
</dbReference>
<dbReference type="AGR" id="RGD:2667"/>
<dbReference type="RGD" id="2667">
    <property type="gene designation" value="Gc"/>
</dbReference>
<dbReference type="eggNOG" id="ENOG502QTPW">
    <property type="taxonomic scope" value="Eukaryota"/>
</dbReference>
<dbReference type="InParanoid" id="P04276"/>
<dbReference type="PhylomeDB" id="P04276"/>
<dbReference type="Reactome" id="R-RNO-196791">
    <property type="pathway name" value="Vitamin D (calciferol) metabolism"/>
</dbReference>
<dbReference type="PRO" id="PR:P04276"/>
<dbReference type="Proteomes" id="UP000002494">
    <property type="component" value="Unplaced"/>
</dbReference>
<dbReference type="GO" id="GO:0030424">
    <property type="term" value="C:axon"/>
    <property type="evidence" value="ECO:0000314"/>
    <property type="project" value="RGD"/>
</dbReference>
<dbReference type="GO" id="GO:0005737">
    <property type="term" value="C:cytoplasm"/>
    <property type="evidence" value="ECO:0000318"/>
    <property type="project" value="GO_Central"/>
</dbReference>
<dbReference type="GO" id="GO:0005615">
    <property type="term" value="C:extracellular space"/>
    <property type="evidence" value="ECO:0000314"/>
    <property type="project" value="RGD"/>
</dbReference>
<dbReference type="GO" id="GO:0048471">
    <property type="term" value="C:perinuclear region of cytoplasm"/>
    <property type="evidence" value="ECO:0000314"/>
    <property type="project" value="RGD"/>
</dbReference>
<dbReference type="GO" id="GO:0003779">
    <property type="term" value="F:actin binding"/>
    <property type="evidence" value="ECO:0000250"/>
    <property type="project" value="UniProtKB"/>
</dbReference>
<dbReference type="GO" id="GO:1902118">
    <property type="term" value="F:calcidiol binding"/>
    <property type="evidence" value="ECO:0000266"/>
    <property type="project" value="RGD"/>
</dbReference>
<dbReference type="GO" id="GO:0005499">
    <property type="term" value="F:vitamin D binding"/>
    <property type="evidence" value="ECO:0000314"/>
    <property type="project" value="RGD"/>
</dbReference>
<dbReference type="GO" id="GO:0090482">
    <property type="term" value="F:vitamin transmembrane transporter activity"/>
    <property type="evidence" value="ECO:0007669"/>
    <property type="project" value="InterPro"/>
</dbReference>
<dbReference type="GO" id="GO:0007565">
    <property type="term" value="P:female pregnancy"/>
    <property type="evidence" value="ECO:0000270"/>
    <property type="project" value="RGD"/>
</dbReference>
<dbReference type="GO" id="GO:0007595">
    <property type="term" value="P:lactation"/>
    <property type="evidence" value="ECO:0000270"/>
    <property type="project" value="RGD"/>
</dbReference>
<dbReference type="GO" id="GO:0032355">
    <property type="term" value="P:response to estradiol"/>
    <property type="evidence" value="ECO:0000270"/>
    <property type="project" value="RGD"/>
</dbReference>
<dbReference type="GO" id="GO:0031667">
    <property type="term" value="P:response to nutrient levels"/>
    <property type="evidence" value="ECO:0000270"/>
    <property type="project" value="RGD"/>
</dbReference>
<dbReference type="GO" id="GO:0048545">
    <property type="term" value="P:response to steroid hormone"/>
    <property type="evidence" value="ECO:0000270"/>
    <property type="project" value="RGD"/>
</dbReference>
<dbReference type="GO" id="GO:0042359">
    <property type="term" value="P:vitamin D metabolic process"/>
    <property type="evidence" value="ECO:0000266"/>
    <property type="project" value="RGD"/>
</dbReference>
<dbReference type="CDD" id="cd00015">
    <property type="entry name" value="ALBUMIN"/>
    <property type="match status" value="1"/>
</dbReference>
<dbReference type="FunFam" id="1.10.246.10:FF:000007">
    <property type="entry name" value="Vitamin D-binding protein"/>
    <property type="match status" value="1"/>
</dbReference>
<dbReference type="Gene3D" id="1.10.246.10">
    <property type="match status" value="5"/>
</dbReference>
<dbReference type="InterPro" id="IPR000264">
    <property type="entry name" value="ALB/AFP/VDB"/>
</dbReference>
<dbReference type="InterPro" id="IPR020858">
    <property type="entry name" value="Serum_albumin-like"/>
</dbReference>
<dbReference type="InterPro" id="IPR020857">
    <property type="entry name" value="Serum_albumin_CS"/>
</dbReference>
<dbReference type="InterPro" id="IPR014760">
    <property type="entry name" value="Serum_albumin_N"/>
</dbReference>
<dbReference type="InterPro" id="IPR000213">
    <property type="entry name" value="VitD-bd"/>
</dbReference>
<dbReference type="InterPro" id="IPR015247">
    <property type="entry name" value="VitD-bind_III"/>
</dbReference>
<dbReference type="PANTHER" id="PTHR11385">
    <property type="entry name" value="SERUM ALBUMIN-RELATED"/>
    <property type="match status" value="1"/>
</dbReference>
<dbReference type="PANTHER" id="PTHR11385:SF11">
    <property type="entry name" value="VITAMIN D-BINDING PROTEIN"/>
    <property type="match status" value="1"/>
</dbReference>
<dbReference type="Pfam" id="PF00273">
    <property type="entry name" value="Serum_albumin"/>
    <property type="match status" value="2"/>
</dbReference>
<dbReference type="Pfam" id="PF09164">
    <property type="entry name" value="VitD-bind_III"/>
    <property type="match status" value="1"/>
</dbReference>
<dbReference type="PRINTS" id="PR00802">
    <property type="entry name" value="SERUMALBUMIN"/>
</dbReference>
<dbReference type="PRINTS" id="PR00804">
    <property type="entry name" value="VITAMNDBNDNG"/>
</dbReference>
<dbReference type="SMART" id="SM00103">
    <property type="entry name" value="ALBUMIN"/>
    <property type="match status" value="2"/>
</dbReference>
<dbReference type="SUPFAM" id="SSF48552">
    <property type="entry name" value="Serum albumin-like"/>
    <property type="match status" value="3"/>
</dbReference>
<dbReference type="PROSITE" id="PS00212">
    <property type="entry name" value="ALBUMIN_1"/>
    <property type="match status" value="1"/>
</dbReference>
<dbReference type="PROSITE" id="PS51438">
    <property type="entry name" value="ALBUMIN_2"/>
    <property type="match status" value="2"/>
</dbReference>
<protein>
    <recommendedName>
        <fullName>Vitamin D-binding protein</fullName>
        <shortName>DBP</shortName>
        <shortName>VDB</shortName>
    </recommendedName>
    <alternativeName>
        <fullName>Gc-globulin</fullName>
    </alternativeName>
    <alternativeName>
        <fullName>Group-specific component</fullName>
    </alternativeName>
</protein>
<sequence length="476" mass="53544">MKRVLVLLLALAFGHALERGRDYEKDKVCQELSTLGKDDFRSLSLILYSRKFPSSTFEQVSQLVKEVVSLTEECCAEGADPNCYDTRTSELSIKSCESDAPFPVHPGTSECCTKEGLERKLCMAALSHQPQEFPAYVEPTNDEICEAFRKDPKGFADQFLFEYSSNYGQAPLPLLVGYTKSYLSMVGSCCTSAKPTVCFLKERLQMKQLLLLTTMSNRVCSQYAAYGKEKSRMSHLIKLAQKVPTANLEDVLPLAEDLTEILSRCCKSTSEDCMARELPEHTLKICGNLSKKNSKFEECCYETTPMGIFMCSYFMPTAEPLQLPAIKLPTSKDLCGQSATQAMDQYTFELSRRTQVPEVFLSKVLDTTLKTLRECCDTQDSVSCFSTQSPLMKRQLTSFIEKGQEMCADYSENTFTEYKKKLAERLRTKMPNASPEELADMVAKHSDFASKCCSINSPPRYCSSQIDAEMRDILQS</sequence>
<proteinExistence type="evidence at protein level"/>